<protein>
    <recommendedName>
        <fullName>Bone marrow proteoglycan</fullName>
        <shortName>BMPG</shortName>
    </recommendedName>
    <alternativeName>
        <fullName>Proteoglycan 2</fullName>
    </alternativeName>
    <component>
        <recommendedName>
            <fullName>Eosinophil granule major basic protein</fullName>
            <shortName>EMBP</shortName>
            <shortName>MBP</shortName>
        </recommendedName>
        <alternativeName>
            <fullName>Pregnancy-associated major basic protein</fullName>
        </alternativeName>
    </component>
</protein>
<sequence>MKLPLLLALLFGAVSALHLRSETSTFETPLGAKTLPEDEETPEQEMEETPCRELEEEEEWGSGSEDASKKDGAVESISVPDMVDKNLTCPEEEDTVKVVGIPGCQTCRYLLVRSLQTFSQAWFTCRRCYRGNLVSIHNFNINYRIQCSVSALNQGQVWIGGRITGSGRCRRFQWVDGSRWNFAYWAAHQPWSRGGHCVALCTRGGHWRRAHCLRRLPFICSY</sequence>
<reference key="1">
    <citation type="journal article" date="1988" name="J. Exp. Med.">
        <title>Acidic precursor revealed in human eosinophil granule major basic protein cDNA.</title>
        <authorList>
            <person name="Barker R.L."/>
            <person name="Gleich G.J."/>
            <person name="Pease L.R."/>
        </authorList>
    </citation>
    <scope>NUCLEOTIDE SEQUENCE [MRNA] (ISOFORM 1)</scope>
    <scope>VARIANT TYR-206</scope>
    <source>
        <tissue>Promyelocyte</tissue>
    </source>
</reference>
<reference key="2">
    <citation type="submission" date="1989-10" db="EMBL/GenBank/DDBJ databases">
        <authorList>
            <person name="Barker R.L."/>
        </authorList>
    </citation>
    <scope>SEQUENCE REVISION TO 84</scope>
</reference>
<reference key="3">
    <citation type="journal article" date="1990" name="Gene">
        <title>Cloning and sequence analysis of the human gene encoding eosinophil major basic protein.</title>
        <authorList>
            <person name="Barker R.L."/>
            <person name="Loegering D.A."/>
            <person name="Arakawa K.C."/>
            <person name="Pease L.R."/>
            <person name="Gleich G.J."/>
        </authorList>
    </citation>
    <scope>NUCLEOTIDE SEQUENCE [GENOMIC DNA]</scope>
    <scope>VARIANT TYR-206</scope>
</reference>
<reference key="4">
    <citation type="journal article" date="1988" name="J. Exp. Med.">
        <title>Isolation of a complementary DNA clone encoding a precursor to human eosinophil major basic protein.</title>
        <authorList>
            <person name="McGrogan M."/>
            <person name="Simonsen C."/>
            <person name="Scott R."/>
            <person name="Giffith J."/>
            <person name="Ellis N."/>
            <person name="Kennedy J."/>
            <person name="Campanelli D."/>
            <person name="Nathan C."/>
            <person name="Gabay J."/>
        </authorList>
    </citation>
    <scope>NUCLEOTIDE SEQUENCE [MRNA] (ISOFORM 1)</scope>
    <scope>VARIANT TYR-206</scope>
</reference>
<reference key="5">
    <citation type="journal article" date="1992" name="Mol. Immunol.">
        <title>Purification and cDNA cloning of a novel factor produced by a human T-cell hybridoma: sequence homology with animal lectins.</title>
        <authorList>
            <person name="Yoshimatsu K."/>
            <person name="Ohya Y."/>
            <person name="Shikata Y."/>
            <person name="Seto T."/>
            <person name="Hasegawa Y."/>
            <person name="Tanaka I."/>
            <person name="Kawamura T."/>
            <person name="Kitoh K."/>
            <person name="Toyoshima S."/>
            <person name="Osawa T."/>
        </authorList>
    </citation>
    <scope>NUCLEOTIDE SEQUENCE [MRNA] (ISOFORM 1)</scope>
    <scope>PARTIAL PROTEIN SEQUENCE</scope>
    <scope>VARIANT TYR-206</scope>
</reference>
<reference key="6">
    <citation type="journal article" date="1995" name="Biochem. J.">
        <title>Human eosinophil major basic protein, a mediator of allergic inflammation, is expressed by alternative splicing from two promoters.</title>
        <authorList>
            <person name="Li M.S."/>
            <person name="Sun L."/>
            <person name="Satoh T."/>
            <person name="Fisher L.M."/>
            <person name="Spry C.J."/>
        </authorList>
    </citation>
    <scope>NUCLEOTIDE SEQUENCE [MRNA] (ISOFORM 1)</scope>
    <scope>VARIANT TYR-206</scope>
    <source>
        <tissue>Bone marrow</tissue>
    </source>
</reference>
<reference key="7">
    <citation type="journal article" date="2004" name="Nat. Genet.">
        <title>Complete sequencing and characterization of 21,243 full-length human cDNAs.</title>
        <authorList>
            <person name="Ota T."/>
            <person name="Suzuki Y."/>
            <person name="Nishikawa T."/>
            <person name="Otsuki T."/>
            <person name="Sugiyama T."/>
            <person name="Irie R."/>
            <person name="Wakamatsu A."/>
            <person name="Hayashi K."/>
            <person name="Sato H."/>
            <person name="Nagai K."/>
            <person name="Kimura K."/>
            <person name="Makita H."/>
            <person name="Sekine M."/>
            <person name="Obayashi M."/>
            <person name="Nishi T."/>
            <person name="Shibahara T."/>
            <person name="Tanaka T."/>
            <person name="Ishii S."/>
            <person name="Yamamoto J."/>
            <person name="Saito K."/>
            <person name="Kawai Y."/>
            <person name="Isono Y."/>
            <person name="Nakamura Y."/>
            <person name="Nagahari K."/>
            <person name="Murakami K."/>
            <person name="Yasuda T."/>
            <person name="Iwayanagi T."/>
            <person name="Wagatsuma M."/>
            <person name="Shiratori A."/>
            <person name="Sudo H."/>
            <person name="Hosoiri T."/>
            <person name="Kaku Y."/>
            <person name="Kodaira H."/>
            <person name="Kondo H."/>
            <person name="Sugawara M."/>
            <person name="Takahashi M."/>
            <person name="Kanda K."/>
            <person name="Yokoi T."/>
            <person name="Furuya T."/>
            <person name="Kikkawa E."/>
            <person name="Omura Y."/>
            <person name="Abe K."/>
            <person name="Kamihara K."/>
            <person name="Katsuta N."/>
            <person name="Sato K."/>
            <person name="Tanikawa M."/>
            <person name="Yamazaki M."/>
            <person name="Ninomiya K."/>
            <person name="Ishibashi T."/>
            <person name="Yamashita H."/>
            <person name="Murakawa K."/>
            <person name="Fujimori K."/>
            <person name="Tanai H."/>
            <person name="Kimata M."/>
            <person name="Watanabe M."/>
            <person name="Hiraoka S."/>
            <person name="Chiba Y."/>
            <person name="Ishida S."/>
            <person name="Ono Y."/>
            <person name="Takiguchi S."/>
            <person name="Watanabe S."/>
            <person name="Yosida M."/>
            <person name="Hotuta T."/>
            <person name="Kusano J."/>
            <person name="Kanehori K."/>
            <person name="Takahashi-Fujii A."/>
            <person name="Hara H."/>
            <person name="Tanase T.-O."/>
            <person name="Nomura Y."/>
            <person name="Togiya S."/>
            <person name="Komai F."/>
            <person name="Hara R."/>
            <person name="Takeuchi K."/>
            <person name="Arita M."/>
            <person name="Imose N."/>
            <person name="Musashino K."/>
            <person name="Yuuki H."/>
            <person name="Oshima A."/>
            <person name="Sasaki N."/>
            <person name="Aotsuka S."/>
            <person name="Yoshikawa Y."/>
            <person name="Matsunawa H."/>
            <person name="Ichihara T."/>
            <person name="Shiohata N."/>
            <person name="Sano S."/>
            <person name="Moriya S."/>
            <person name="Momiyama H."/>
            <person name="Satoh N."/>
            <person name="Takami S."/>
            <person name="Terashima Y."/>
            <person name="Suzuki O."/>
            <person name="Nakagawa S."/>
            <person name="Senoh A."/>
            <person name="Mizoguchi H."/>
            <person name="Goto Y."/>
            <person name="Shimizu F."/>
            <person name="Wakebe H."/>
            <person name="Hishigaki H."/>
            <person name="Watanabe T."/>
            <person name="Sugiyama A."/>
            <person name="Takemoto M."/>
            <person name="Kawakami B."/>
            <person name="Yamazaki M."/>
            <person name="Watanabe K."/>
            <person name="Kumagai A."/>
            <person name="Itakura S."/>
            <person name="Fukuzumi Y."/>
            <person name="Fujimori Y."/>
            <person name="Komiyama M."/>
            <person name="Tashiro H."/>
            <person name="Tanigami A."/>
            <person name="Fujiwara T."/>
            <person name="Ono T."/>
            <person name="Yamada K."/>
            <person name="Fujii Y."/>
            <person name="Ozaki K."/>
            <person name="Hirao M."/>
            <person name="Ohmori Y."/>
            <person name="Kawabata A."/>
            <person name="Hikiji T."/>
            <person name="Kobatake N."/>
            <person name="Inagaki H."/>
            <person name="Ikema Y."/>
            <person name="Okamoto S."/>
            <person name="Okitani R."/>
            <person name="Kawakami T."/>
            <person name="Noguchi S."/>
            <person name="Itoh T."/>
            <person name="Shigeta K."/>
            <person name="Senba T."/>
            <person name="Matsumura K."/>
            <person name="Nakajima Y."/>
            <person name="Mizuno T."/>
            <person name="Morinaga M."/>
            <person name="Sasaki M."/>
            <person name="Togashi T."/>
            <person name="Oyama M."/>
            <person name="Hata H."/>
            <person name="Watanabe M."/>
            <person name="Komatsu T."/>
            <person name="Mizushima-Sugano J."/>
            <person name="Satoh T."/>
            <person name="Shirai Y."/>
            <person name="Takahashi Y."/>
            <person name="Nakagawa K."/>
            <person name="Okumura K."/>
            <person name="Nagase T."/>
            <person name="Nomura N."/>
            <person name="Kikuchi H."/>
            <person name="Masuho Y."/>
            <person name="Yamashita R."/>
            <person name="Nakai K."/>
            <person name="Yada T."/>
            <person name="Nakamura Y."/>
            <person name="Ohara O."/>
            <person name="Isogai T."/>
            <person name="Sugano S."/>
        </authorList>
    </citation>
    <scope>NUCLEOTIDE SEQUENCE [LARGE SCALE MRNA] (ISOFORM 1)</scope>
    <scope>VARIANT TYR-206</scope>
    <source>
        <tissue>Placenta</tissue>
    </source>
</reference>
<reference key="8">
    <citation type="submission" date="2004-05" db="EMBL/GenBank/DDBJ databases">
        <title>Cloning of human full open reading frames in Gateway(TM) system entry vector (pDONR201).</title>
        <authorList>
            <person name="Ebert L."/>
            <person name="Schick M."/>
            <person name="Neubert P."/>
            <person name="Schatten R."/>
            <person name="Henze S."/>
            <person name="Korn B."/>
        </authorList>
    </citation>
    <scope>NUCLEOTIDE SEQUENCE [LARGE SCALE MRNA] (ISOFORM 1)</scope>
    <scope>VARIANT TYR-206</scope>
</reference>
<reference key="9">
    <citation type="submission" date="2006-07" db="EMBL/GenBank/DDBJ databases">
        <title>A computer system platform used to predict novel genes.</title>
        <authorList>
            <person name="Yu Z."/>
            <person name="Zheng Z."/>
            <person name="Tang T."/>
            <person name="Fu Y."/>
        </authorList>
    </citation>
    <scope>NUCLEOTIDE SEQUENCE [LARGE SCALE MRNA] (ISOFORM 2)</scope>
</reference>
<reference key="10">
    <citation type="journal article" date="2006" name="Nature">
        <title>Human chromosome 11 DNA sequence and analysis including novel gene identification.</title>
        <authorList>
            <person name="Taylor T.D."/>
            <person name="Noguchi H."/>
            <person name="Totoki Y."/>
            <person name="Toyoda A."/>
            <person name="Kuroki Y."/>
            <person name="Dewar K."/>
            <person name="Lloyd C."/>
            <person name="Itoh T."/>
            <person name="Takeda T."/>
            <person name="Kim D.-W."/>
            <person name="She X."/>
            <person name="Barlow K.F."/>
            <person name="Bloom T."/>
            <person name="Bruford E."/>
            <person name="Chang J.L."/>
            <person name="Cuomo C.A."/>
            <person name="Eichler E."/>
            <person name="FitzGerald M.G."/>
            <person name="Jaffe D.B."/>
            <person name="LaButti K."/>
            <person name="Nicol R."/>
            <person name="Park H.-S."/>
            <person name="Seaman C."/>
            <person name="Sougnez C."/>
            <person name="Yang X."/>
            <person name="Zimmer A.R."/>
            <person name="Zody M.C."/>
            <person name="Birren B.W."/>
            <person name="Nusbaum C."/>
            <person name="Fujiyama A."/>
            <person name="Hattori M."/>
            <person name="Rogers J."/>
            <person name="Lander E.S."/>
            <person name="Sakaki Y."/>
        </authorList>
    </citation>
    <scope>NUCLEOTIDE SEQUENCE [LARGE SCALE GENOMIC DNA]</scope>
</reference>
<reference key="11">
    <citation type="journal article" date="2004" name="Genome Res.">
        <title>The status, quality, and expansion of the NIH full-length cDNA project: the Mammalian Gene Collection (MGC).</title>
        <authorList>
            <consortium name="The MGC Project Team"/>
        </authorList>
    </citation>
    <scope>NUCLEOTIDE SEQUENCE [LARGE SCALE MRNA]</scope>
    <scope>VARIANT TYR-206</scope>
    <source>
        <tissue>Placenta</tissue>
    </source>
</reference>
<reference key="12">
    <citation type="journal article" date="1993" name="Biochim. Biophys. Acta">
        <title>Pro-major basic protein has three types of sugar chains at the pro-portion.</title>
        <authorList>
            <person name="Shikata Y."/>
            <person name="Hayashi Y."/>
            <person name="Yoshimatsu K."/>
            <person name="Ohya Y."/>
            <person name="Seto T."/>
            <person name="Fukushima K."/>
            <person name="Yoshida Y."/>
        </authorList>
    </citation>
    <scope>PROTEIN SEQUENCE OF 17-222</scope>
    <scope>GLYCOSYLATION AT SER-24; THR-25; SER-62 AND ASN-86</scope>
    <source>
        <tissue>Liver</tissue>
    </source>
</reference>
<reference key="13">
    <citation type="journal article" date="1993" name="J. Biol. Chem.">
        <title>Circulating human pregnancy-associated plasma protein-A is disulfide-bridged to the proform of eosinophil major basic protein.</title>
        <authorList>
            <person name="Oxvig C."/>
            <person name="Sand O."/>
            <person name="Kristensen T."/>
            <person name="Gleich G.J."/>
            <person name="Sottrup-Jensen L."/>
        </authorList>
    </citation>
    <scope>PROTEIN SEQUENCE OF 17-26; 47-52; 98-108; 172-179 AND 210-222</scope>
    <scope>SUBUNIT</scope>
    <scope>INTERCHAIN DISULFIDE BOND</scope>
    <source>
        <tissue>Serum</tissue>
    </source>
</reference>
<reference key="14">
    <citation type="journal article" date="1995" name="J. Biol. Chem.">
        <title>Identification of angiotensinogen and complement C3dg as novel proteins binding the proform of eosinophil major basic protein in human pregnancy serum and plasma.</title>
        <authorList>
            <person name="Oxvig C."/>
            <person name="Haaning J."/>
            <person name="Kristensen L."/>
            <person name="Wagner J.M."/>
            <person name="Rubin I."/>
            <person name="Stigbrand T."/>
            <person name="Gleich G.J."/>
            <person name="Sottrup-Jensen L."/>
        </authorList>
    </citation>
    <scope>PROTEIN SEQUENCE OF 17-29</scope>
    <scope>SUBUNIT</scope>
    <scope>DEVELOPMENTAL STAGE</scope>
    <source>
        <tissue>Serum</tissue>
    </source>
</reference>
<reference key="15">
    <citation type="journal article" date="1988" name="J. Biol. Chem.">
        <title>Biochemical and amino acid sequence analysis of human eosinophil granule major basic protein.</title>
        <authorList>
            <person name="Wasmoen T.L."/>
            <person name="Bell M.P."/>
            <person name="Loegering D.A."/>
            <person name="Gleich G.J."/>
            <person name="Prendergast F.G."/>
            <person name="McKean D.J."/>
        </authorList>
    </citation>
    <scope>PROTEIN SEQUENCE OF 106-222</scope>
</reference>
<reference key="16">
    <citation type="journal article" date="1989" name="Proc. Natl. Acad. Sci. U.S.A.">
        <title>Antibiotic proteins of human polymorphonuclear leukocytes.</title>
        <authorList>
            <person name="Gabay J.E."/>
            <person name="Scott R.W."/>
            <person name="Campanelli D."/>
            <person name="Griffith J."/>
            <person name="Wilde C."/>
            <person name="Marra M.N."/>
            <person name="Seeger M."/>
            <person name="Nathan C.F."/>
        </authorList>
    </citation>
    <scope>PROTEIN SEQUENCE OF 106-125</scope>
</reference>
<reference key="17">
    <citation type="journal article" date="1988" name="J. Leukoc. Biol.">
        <title>Eosinophil granule cationic proteins: major basic protein is distinct from the smaller subunit of eosinophil peroxidase.</title>
        <authorList>
            <person name="Weller P.F."/>
            <person name="Ackerman S.J."/>
            <person name="Smith J.A."/>
        </authorList>
    </citation>
    <scope>PROTEIN SEQUENCE OF 108-124</scope>
</reference>
<reference key="18">
    <citation type="journal article" date="1994" name="Biochemistry">
        <title>Amino acid sequence of human pregnancy-associated plasma protein-A derived from cloned cDNA.</title>
        <authorList>
            <person name="Kristensen T."/>
            <person name="Oxvig C."/>
            <person name="Sand O."/>
            <person name="Moller N.P.H."/>
            <person name="Sottrup-Jensen L."/>
        </authorList>
    </citation>
    <scope>PROTEIN SEQUENCE OF 172-179 AND 210-222</scope>
    <scope>SUBUNIT</scope>
    <source>
        <tissue>Serum</tissue>
    </source>
</reference>
<reference key="19">
    <citation type="journal article" date="1989" name="J. Exp. Med.">
        <title>Evidence of eosinophil granule major basic protein in human placenta.</title>
        <authorList>
            <person name="Wasmoen T.L."/>
            <person name="McKean D.J."/>
            <person name="Benirschke K."/>
            <person name="Coulam C.B."/>
            <person name="Gleich G.J."/>
        </authorList>
    </citation>
    <scope>PROTEIN SEQUENCE OF 177-196</scope>
    <source>
        <tissue>Placenta</tissue>
    </source>
</reference>
<reference key="20">
    <citation type="journal article" date="1994" name="Biochem. Mol. Biol. Int.">
        <title>Location and nature of carbohydrate groups in proform of human major basic protein isolated from pregnancy serum.</title>
        <authorList>
            <person name="Oxvig C."/>
            <person name="Haaning J."/>
            <person name="Hojrup P."/>
            <person name="Sottrup-Jensen L."/>
        </authorList>
    </citation>
    <scope>GLYCOSYLATION AT THR-23; SER-24; THR-25; THR-34; SER-62 AND ASN-86</scope>
</reference>
<reference key="21">
    <citation type="journal article" date="1994" name="FEBS Lett.">
        <title>Localization of disulfide bridges and free sulfhydryl groups in human eosinophil granule major basic protein.</title>
        <authorList>
            <person name="Oxvig C."/>
            <person name="Gleich G.J."/>
            <person name="Sottrup-Jensen L."/>
        </authorList>
    </citation>
    <scope>DISULFIDE BONDS</scope>
</reference>
<reference key="22">
    <citation type="journal article" date="1994" name="Lab. Invest.">
        <title>Localization of pregnancy-associated plasma protein-A and colocalization of pregnancy-associated plasma protein-A messenger ribonucleic acid and eosinophil granule major basic protein messenger ribonucleic acid in placenta.</title>
        <authorList>
            <person name="Bonno M."/>
            <person name="Oxvig C."/>
            <person name="Kephart G.M."/>
            <person name="Wagner J.M."/>
            <person name="Kristensen T."/>
            <person name="Sottrup-Jensen L."/>
            <person name="Gleich G.J."/>
        </authorList>
    </citation>
    <scope>TISSUE SPECIFICITY</scope>
</reference>
<reference key="23">
    <citation type="journal article" date="1999" name="Biol. Reprod.">
        <title>Messenger ribonucleic acid levels of pregnancy-associated plasma protein-A and the proform of eosinophil major basic protein: expression in human reproductive and nonreproductive tissues.</title>
        <authorList>
            <person name="Overgaard M.T."/>
            <person name="Oxvig C."/>
            <person name="Christiansen M."/>
            <person name="Lawrence J.B."/>
            <person name="Conover C.A."/>
            <person name="Gleich G.J."/>
            <person name="Sottrup-Jensen L."/>
            <person name="Haaning J."/>
        </authorList>
    </citation>
    <scope>TISSUE SPECIFICITY</scope>
    <scope>DEVELOPMENTAL STAGE</scope>
</reference>
<reference key="24">
    <citation type="journal article" date="2000" name="J. Biol. Chem.">
        <title>Expression of recombinant human pregnancy-associated plasma protein-A and identification of the proform of eosinophil major basic protein as its physiological inhibitor.</title>
        <authorList>
            <person name="Overgaard M.T."/>
            <person name="Haaning J."/>
            <person name="Boldt H.B."/>
            <person name="Olsen I.M."/>
            <person name="Laursen L.S."/>
            <person name="Christiansen M."/>
            <person name="Gleich G.J."/>
            <person name="Sottrup-Jensen L."/>
            <person name="Conover C.A."/>
            <person name="Oxvig C."/>
        </authorList>
    </citation>
    <scope>FUNCTION</scope>
    <scope>SUBUNIT</scope>
</reference>
<reference key="25">
    <citation type="journal article" date="2003" name="J. Biol. Chem.">
        <title>Complex of pregnancy-associated plasma protein-A and the proform of eosinophil major basic protein. Disulfide structure and carbohydrate attachment sites.</title>
        <authorList>
            <person name="Overgaard M.T."/>
            <person name="Sorensen E.S."/>
            <person name="Stachowiak D."/>
            <person name="Boldt H.B."/>
            <person name="Kristensen L."/>
            <person name="Sottrup-Jensen L."/>
            <person name="Oxvig C."/>
        </authorList>
    </citation>
    <scope>INTERCHAIN DISULFIDE BONDS</scope>
</reference>
<reference key="26">
    <citation type="journal article" date="2008" name="J. Biol. Chem.">
        <title>Post-translational tyrosine nitration of eosinophil granule toxins mediated by eosinophil peroxidase.</title>
        <authorList>
            <person name="Ulrich M."/>
            <person name="Petre A."/>
            <person name="Youhnovski N."/>
            <person name="Proemm F."/>
            <person name="Schirle M."/>
            <person name="Schumm M."/>
            <person name="Pero R.S."/>
            <person name="Doyle A."/>
            <person name="Checkel J."/>
            <person name="Kita H."/>
            <person name="Thiyagarajan N."/>
            <person name="Acharya K.R."/>
            <person name="Schmid-Grendelmeier P."/>
            <person name="Simon H.-U."/>
            <person name="Schwarz H."/>
            <person name="Tsutsui M."/>
            <person name="Shimokawa H."/>
            <person name="Bellon G."/>
            <person name="Lee J.J."/>
            <person name="Przybylski M."/>
            <person name="Doering G."/>
        </authorList>
    </citation>
    <scope>NITRATION</scope>
</reference>
<reference key="27">
    <citation type="journal article" date="2015" name="Mol. Cell. Proteomics">
        <title>Identification of chondroitin sulfate linkage region glycopeptides reveals prohormones as a novel class of proteoglycans.</title>
        <authorList>
            <person name="Noborn F."/>
            <person name="Gomez Toledo A."/>
            <person name="Sihlbom C."/>
            <person name="Lengqvist J."/>
            <person name="Fries E."/>
            <person name="Kjellen L."/>
            <person name="Nilsson J."/>
            <person name="Larson G."/>
        </authorList>
    </citation>
    <scope>SUBCELLULAR LOCATION</scope>
    <scope>TISSUE SPECIFICITY</scope>
    <scope>GLYCOSYLATION AT SER-62</scope>
</reference>
<reference key="28">
    <citation type="journal article" date="2020" name="Glycobiology">
        <title>An affinity chromatography and glycoproteomics workflow to profile the chondroitin sulfate proteoglycans that interact with malarial VAR2CSA in the placenta and in cancer.</title>
        <authorList>
            <person name="Toledo A.G."/>
            <person name="Pihl J."/>
            <person name="Spliid C.B."/>
            <person name="Persson A."/>
            <person name="Nilsson J."/>
            <person name="Pereira M.A."/>
            <person name="Gustavsson T."/>
            <person name="Choudhary S."/>
            <person name="Oo H.Z."/>
            <person name="Black P.C."/>
            <person name="Daugaard M."/>
            <person name="Esko J.D."/>
            <person name="Larson G."/>
            <person name="Salanti A."/>
            <person name="Clausen T.M."/>
        </authorList>
    </citation>
    <scope>TISSUE SPECIFICITY</scope>
    <scope>GLYCOSYLATION AT SER-62</scope>
</reference>
<reference key="29">
    <citation type="journal article" date="2022" name="J. Proteins Proteom.">
        <title>Mass spectrometric analysis of chondroitin sulfate-linked peptides.</title>
        <authorList>
            <person name="Ramarajan M.G."/>
            <person name="Saraswat M."/>
            <person name="Budhraja R."/>
            <person name="Garapati K."/>
            <person name="Raymond K."/>
            <person name="Pandey A."/>
        </authorList>
    </citation>
    <scope>SUBCELLULAR LOCATION</scope>
    <scope>TISSUE SPECIFICITY</scope>
    <scope>GLYCOSYLATION AT SER-62</scope>
</reference>
<reference key="30">
    <citation type="journal article" date="2023" name="Mol. Cell. Proteomics">
        <title>Mapping the Human Chondroitin Sulfate Glycoproteome Reveals an Unexpected Correlation Between Glycan Sulfation and Attachment Site Characteristics.</title>
        <authorList>
            <person name="Noborn F."/>
            <person name="Nilsson J."/>
            <person name="Sihlbom C."/>
            <person name="Nikpour M."/>
            <person name="Kjellen L."/>
            <person name="Larson G."/>
        </authorList>
    </citation>
    <scope>SUBCELLULAR LOCATION</scope>
    <scope>TISSUE SPECIFICITY</scope>
    <scope>GLYCOSYLATION AT SER-62</scope>
</reference>
<reference key="31">
    <citation type="journal article" date="2001" name="J. Biol. Chem.">
        <title>Crystal structure of the eosinophil major basic protein at 1.8-A. An atypical lectin with a paradigm shift in specificity.</title>
        <authorList>
            <person name="Swaminathan G.J."/>
            <person name="Weaver A.J."/>
            <person name="Loegering D.A."/>
            <person name="Checkel J.L."/>
            <person name="Leonidas D.D."/>
            <person name="Gleich G.J."/>
            <person name="Acharya K.R."/>
        </authorList>
    </citation>
    <scope>X-RAY CRYSTALLOGRAPHY (1.8 ANGSTROMS) OF 107-222</scope>
    <scope>HEPARIN-BINDING</scope>
</reference>
<reference key="32">
    <citation type="journal article" date="2006" name="Science">
        <title>The consensus coding sequences of human breast and colorectal cancers.</title>
        <authorList>
            <person name="Sjoeblom T."/>
            <person name="Jones S."/>
            <person name="Wood L.D."/>
            <person name="Parsons D.W."/>
            <person name="Lin J."/>
            <person name="Barber T.D."/>
            <person name="Mandelker D."/>
            <person name="Leary R.J."/>
            <person name="Ptak J."/>
            <person name="Silliman N."/>
            <person name="Szabo S."/>
            <person name="Buckhaults P."/>
            <person name="Farrell C."/>
            <person name="Meeh P."/>
            <person name="Markowitz S.D."/>
            <person name="Willis J."/>
            <person name="Dawson D."/>
            <person name="Willson J.K.V."/>
            <person name="Gazdar A.F."/>
            <person name="Hartigan J."/>
            <person name="Wu L."/>
            <person name="Liu C."/>
            <person name="Parmigiani G."/>
            <person name="Park B.H."/>
            <person name="Bachman K.E."/>
            <person name="Papadopoulos N."/>
            <person name="Vogelstein B."/>
            <person name="Kinzler K.W."/>
            <person name="Velculescu V.E."/>
        </authorList>
    </citation>
    <scope>VARIANT [LARGE SCALE ANALYSIS] CYS-179</scope>
</reference>
<keyword id="KW-0002">3D-structure</keyword>
<keyword id="KW-0025">Alternative splicing</keyword>
<keyword id="KW-0044">Antibiotic</keyword>
<keyword id="KW-0929">Antimicrobial</keyword>
<keyword id="KW-0968">Cytoplasmic vesicle</keyword>
<keyword id="KW-0903">Direct protein sequencing</keyword>
<keyword id="KW-1015">Disulfide bond</keyword>
<keyword id="KW-0325">Glycoprotein</keyword>
<keyword id="KW-0358">Heparin-binding</keyword>
<keyword id="KW-0391">Immunity</keyword>
<keyword id="KW-0430">Lectin</keyword>
<keyword id="KW-0944">Nitration</keyword>
<keyword id="KW-0654">Proteoglycan</keyword>
<keyword id="KW-1267">Proteomics identification</keyword>
<keyword id="KW-1185">Reference proteome</keyword>
<keyword id="KW-0964">Secreted</keyword>
<keyword id="KW-0732">Signal</keyword>
<dbReference type="EMBL" id="Y00809">
    <property type="protein sequence ID" value="CAA68751.1"/>
    <property type="molecule type" value="mRNA"/>
</dbReference>
<dbReference type="EMBL" id="M36805">
    <property type="protein sequence ID" value="AAA36203.1"/>
    <property type="molecule type" value="mRNA"/>
</dbReference>
<dbReference type="EMBL" id="M34462">
    <property type="protein sequence ID" value="AAA35796.1"/>
    <property type="molecule type" value="Genomic_DNA"/>
</dbReference>
<dbReference type="EMBL" id="M35670">
    <property type="protein sequence ID" value="AAA35965.1"/>
    <property type="molecule type" value="mRNA"/>
</dbReference>
<dbReference type="EMBL" id="X14088">
    <property type="protein sequence ID" value="CAA32250.1"/>
    <property type="molecule type" value="mRNA"/>
</dbReference>
<dbReference type="EMBL" id="X65787">
    <property type="protein sequence ID" value="CAA46670.1"/>
    <property type="molecule type" value="mRNA"/>
</dbReference>
<dbReference type="EMBL" id="Z26248">
    <property type="protein sequence ID" value="CAA81207.1"/>
    <property type="molecule type" value="mRNA"/>
</dbReference>
<dbReference type="EMBL" id="AK312195">
    <property type="protein sequence ID" value="BAG35128.1"/>
    <property type="molecule type" value="mRNA"/>
</dbReference>
<dbReference type="EMBL" id="CR450311">
    <property type="protein sequence ID" value="CAG29307.1"/>
    <property type="molecule type" value="mRNA"/>
</dbReference>
<dbReference type="EMBL" id="DQ846874">
    <property type="protein sequence ID" value="ABI63361.1"/>
    <property type="molecule type" value="mRNA"/>
</dbReference>
<dbReference type="EMBL" id="AP000781">
    <property type="status" value="NOT_ANNOTATED_CDS"/>
    <property type="molecule type" value="Genomic_DNA"/>
</dbReference>
<dbReference type="EMBL" id="BC005929">
    <property type="protein sequence ID" value="AAH05929.1"/>
    <property type="molecule type" value="mRNA"/>
</dbReference>
<dbReference type="CCDS" id="CCDS58133.1">
    <molecule id="P13727-2"/>
</dbReference>
<dbReference type="CCDS" id="CCDS7955.1">
    <molecule id="P13727-1"/>
</dbReference>
<dbReference type="PIR" id="I54055">
    <property type="entry name" value="JL0085"/>
</dbReference>
<dbReference type="RefSeq" id="NP_001230174.1">
    <molecule id="P13727-2"/>
    <property type="nucleotide sequence ID" value="NM_001243245.3"/>
</dbReference>
<dbReference type="RefSeq" id="NP_001289855.1">
    <molecule id="P13727-1"/>
    <property type="nucleotide sequence ID" value="NM_001302926.2"/>
</dbReference>
<dbReference type="RefSeq" id="NP_001289856.1">
    <molecule id="P13727-1"/>
    <property type="nucleotide sequence ID" value="NM_001302927.2"/>
</dbReference>
<dbReference type="RefSeq" id="NP_002719.3">
    <molecule id="P13727-1"/>
    <property type="nucleotide sequence ID" value="NM_002728.5"/>
</dbReference>
<dbReference type="PDB" id="1H8U">
    <property type="method" value="X-ray"/>
    <property type="resolution" value="1.80 A"/>
    <property type="chains" value="A/B=106-222"/>
</dbReference>
<dbReference type="PDB" id="2BRS">
    <property type="method" value="X-ray"/>
    <property type="resolution" value="2.20 A"/>
    <property type="chains" value="A/B=106-222"/>
</dbReference>
<dbReference type="PDB" id="4QXX">
    <property type="method" value="X-ray"/>
    <property type="resolution" value="1.45 A"/>
    <property type="chains" value="Z=131-135"/>
</dbReference>
<dbReference type="PDB" id="7Y5N">
    <property type="method" value="EM"/>
    <property type="resolution" value="3.45 A"/>
    <property type="chains" value="A=1-222"/>
</dbReference>
<dbReference type="PDB" id="8HGG">
    <property type="method" value="EM"/>
    <property type="resolution" value="3.64 A"/>
    <property type="chains" value="A/B=1-222"/>
</dbReference>
<dbReference type="PDB" id="9DKZ">
    <property type="method" value="EM"/>
    <property type="resolution" value="3.20 A"/>
    <property type="chains" value="A=107-222"/>
</dbReference>
<dbReference type="PDBsum" id="1H8U"/>
<dbReference type="PDBsum" id="2BRS"/>
<dbReference type="PDBsum" id="4QXX"/>
<dbReference type="PDBsum" id="7Y5N"/>
<dbReference type="PDBsum" id="8HGG"/>
<dbReference type="PDBsum" id="9DKZ"/>
<dbReference type="EMDB" id="EMD-33621"/>
<dbReference type="EMDB" id="EMD-34738"/>
<dbReference type="SMR" id="P13727"/>
<dbReference type="BioGRID" id="111544">
    <property type="interactions" value="303"/>
</dbReference>
<dbReference type="CORUM" id="P13727"/>
<dbReference type="FunCoup" id="P13727">
    <property type="interactions" value="128"/>
</dbReference>
<dbReference type="IntAct" id="P13727">
    <property type="interactions" value="263"/>
</dbReference>
<dbReference type="STRING" id="9606.ENSP00000312134"/>
<dbReference type="DrugBank" id="DB06752">
    <property type="generic name" value="Chymopapain"/>
</dbReference>
<dbReference type="DrugBank" id="DB00020">
    <property type="generic name" value="Sargramostim"/>
</dbReference>
<dbReference type="MEROPS" id="I63.001"/>
<dbReference type="UniLectin" id="P13727"/>
<dbReference type="GlyCosmos" id="P13727">
    <property type="glycosylation" value="6 sites, 1 glycan"/>
</dbReference>
<dbReference type="GlyGen" id="P13727">
    <property type="glycosylation" value="7 sites, 4 N-linked glycans (1 site), 2 O-linked glycans (4 sites)"/>
</dbReference>
<dbReference type="iPTMnet" id="P13727"/>
<dbReference type="PhosphoSitePlus" id="P13727"/>
<dbReference type="BioMuta" id="PRG2"/>
<dbReference type="DMDM" id="281185479"/>
<dbReference type="MassIVE" id="P13727"/>
<dbReference type="PaxDb" id="9606-ENSP00000312134"/>
<dbReference type="PeptideAtlas" id="P13727"/>
<dbReference type="ProteomicsDB" id="1773"/>
<dbReference type="ProteomicsDB" id="52978">
    <molecule id="P13727-1"/>
</dbReference>
<dbReference type="Pumba" id="P13727"/>
<dbReference type="TopDownProteomics" id="P13727-1">
    <molecule id="P13727-1"/>
</dbReference>
<dbReference type="Antibodypedia" id="14105">
    <property type="antibodies" value="301 antibodies from 28 providers"/>
</dbReference>
<dbReference type="DNASU" id="5553"/>
<dbReference type="Ensembl" id="ENST00000311862.10">
    <molecule id="P13727-1"/>
    <property type="protein sequence ID" value="ENSP00000312134.5"/>
    <property type="gene ID" value="ENSG00000186652.10"/>
</dbReference>
<dbReference type="Ensembl" id="ENST00000525955.1">
    <molecule id="P13727-1"/>
    <property type="protein sequence ID" value="ENSP00000433016.1"/>
    <property type="gene ID" value="ENSG00000186652.10"/>
</dbReference>
<dbReference type="Ensembl" id="ENST00000533605.5">
    <molecule id="P13727-2"/>
    <property type="protein sequence ID" value="ENSP00000433231.1"/>
    <property type="gene ID" value="ENSG00000186652.10"/>
</dbReference>
<dbReference type="GeneID" id="5553"/>
<dbReference type="KEGG" id="hsa:5553"/>
<dbReference type="MANE-Select" id="ENST00000311862.10">
    <property type="protein sequence ID" value="ENSP00000312134.5"/>
    <property type="RefSeq nucleotide sequence ID" value="NM_002728.6"/>
    <property type="RefSeq protein sequence ID" value="NP_002719.3"/>
</dbReference>
<dbReference type="UCSC" id="uc001nkc.4">
    <molecule id="P13727-1"/>
    <property type="organism name" value="human"/>
</dbReference>
<dbReference type="AGR" id="HGNC:9362"/>
<dbReference type="CTD" id="5553"/>
<dbReference type="DisGeNET" id="5553"/>
<dbReference type="GeneCards" id="PRG2"/>
<dbReference type="HGNC" id="HGNC:9362">
    <property type="gene designation" value="PRG2"/>
</dbReference>
<dbReference type="HPA" id="ENSG00000186652">
    <property type="expression patterns" value="Tissue enriched (placenta)"/>
</dbReference>
<dbReference type="MIM" id="605601">
    <property type="type" value="gene"/>
</dbReference>
<dbReference type="neXtProt" id="NX_P13727"/>
<dbReference type="OpenTargets" id="ENSG00000186652"/>
<dbReference type="PharmGKB" id="PA33734"/>
<dbReference type="VEuPathDB" id="HostDB:ENSG00000186652"/>
<dbReference type="eggNOG" id="KOG4297">
    <property type="taxonomic scope" value="Eukaryota"/>
</dbReference>
<dbReference type="GeneTree" id="ENSGT00440000039859"/>
<dbReference type="HOGENOM" id="CLU_107200_1_0_1"/>
<dbReference type="InParanoid" id="P13727"/>
<dbReference type="OMA" id="WGRCKRF"/>
<dbReference type="OrthoDB" id="6369810at2759"/>
<dbReference type="PAN-GO" id="P13727">
    <property type="GO annotations" value="0 GO annotations based on evolutionary models"/>
</dbReference>
<dbReference type="PhylomeDB" id="P13727"/>
<dbReference type="TreeFam" id="TF336281"/>
<dbReference type="PathwayCommons" id="P13727"/>
<dbReference type="Reactome" id="R-HSA-6798695">
    <property type="pathway name" value="Neutrophil degranulation"/>
</dbReference>
<dbReference type="SignaLink" id="P13727"/>
<dbReference type="SIGNOR" id="P13727"/>
<dbReference type="BioGRID-ORCS" id="5553">
    <property type="hits" value="10 hits in 1157 CRISPR screens"/>
</dbReference>
<dbReference type="ChiTaRS" id="PRG2">
    <property type="organism name" value="human"/>
</dbReference>
<dbReference type="EvolutionaryTrace" id="P13727"/>
<dbReference type="GeneWiki" id="Major_basic_protein"/>
<dbReference type="GenomeRNAi" id="5553"/>
<dbReference type="Pharos" id="P13727">
    <property type="development level" value="Tbio"/>
</dbReference>
<dbReference type="PRO" id="PR:P13727"/>
<dbReference type="Proteomes" id="UP000005640">
    <property type="component" value="Chromosome 11"/>
</dbReference>
<dbReference type="RNAct" id="P13727">
    <property type="molecule type" value="protein"/>
</dbReference>
<dbReference type="Bgee" id="ENSG00000186652">
    <property type="expression patterns" value="Expressed in placenta and 85 other cell types or tissues"/>
</dbReference>
<dbReference type="GO" id="GO:0062023">
    <property type="term" value="C:collagen-containing extracellular matrix"/>
    <property type="evidence" value="ECO:0007005"/>
    <property type="project" value="BHF-UCL"/>
</dbReference>
<dbReference type="GO" id="GO:0070062">
    <property type="term" value="C:extracellular exosome"/>
    <property type="evidence" value="ECO:0007005"/>
    <property type="project" value="UniProtKB"/>
</dbReference>
<dbReference type="GO" id="GO:0005576">
    <property type="term" value="C:extracellular region"/>
    <property type="evidence" value="ECO:0000304"/>
    <property type="project" value="Reactome"/>
</dbReference>
<dbReference type="GO" id="GO:1904813">
    <property type="term" value="C:ficolin-1-rich granule lumen"/>
    <property type="evidence" value="ECO:0000304"/>
    <property type="project" value="Reactome"/>
</dbReference>
<dbReference type="GO" id="GO:0030133">
    <property type="term" value="C:transport vesicle"/>
    <property type="evidence" value="ECO:0007669"/>
    <property type="project" value="UniProtKB-SubCell"/>
</dbReference>
<dbReference type="GO" id="GO:0030246">
    <property type="term" value="F:carbohydrate binding"/>
    <property type="evidence" value="ECO:0000304"/>
    <property type="project" value="ProtInc"/>
</dbReference>
<dbReference type="GO" id="GO:0030021">
    <property type="term" value="F:extracellular matrix structural constituent conferring compression resistance"/>
    <property type="evidence" value="ECO:0007005"/>
    <property type="project" value="BHF-UCL"/>
</dbReference>
<dbReference type="GO" id="GO:0008201">
    <property type="term" value="F:heparin binding"/>
    <property type="evidence" value="ECO:0007669"/>
    <property type="project" value="UniProtKB-KW"/>
</dbReference>
<dbReference type="GO" id="GO:0042742">
    <property type="term" value="P:defense response to bacterium"/>
    <property type="evidence" value="ECO:0007669"/>
    <property type="project" value="UniProtKB-KW"/>
</dbReference>
<dbReference type="GO" id="GO:0002215">
    <property type="term" value="P:defense response to nematode"/>
    <property type="evidence" value="ECO:0007669"/>
    <property type="project" value="Ensembl"/>
</dbReference>
<dbReference type="GO" id="GO:0006955">
    <property type="term" value="P:immune response"/>
    <property type="evidence" value="ECO:0007669"/>
    <property type="project" value="InterPro"/>
</dbReference>
<dbReference type="GO" id="GO:0032693">
    <property type="term" value="P:negative regulation of interleukin-10 production"/>
    <property type="evidence" value="ECO:0007669"/>
    <property type="project" value="Ensembl"/>
</dbReference>
<dbReference type="GO" id="GO:0010936">
    <property type="term" value="P:negative regulation of macrophage cytokine production"/>
    <property type="evidence" value="ECO:0007669"/>
    <property type="project" value="Ensembl"/>
</dbReference>
<dbReference type="GO" id="GO:0032753">
    <property type="term" value="P:positive regulation of interleukin-4 production"/>
    <property type="evidence" value="ECO:0007669"/>
    <property type="project" value="Ensembl"/>
</dbReference>
<dbReference type="CDD" id="cd03598">
    <property type="entry name" value="CLECT_EMBP_like"/>
    <property type="match status" value="1"/>
</dbReference>
<dbReference type="FunFam" id="3.10.100.10:FF:000090">
    <property type="entry name" value="Proteoglycan 2, bone marrow"/>
    <property type="match status" value="1"/>
</dbReference>
<dbReference type="Gene3D" id="3.10.100.10">
    <property type="entry name" value="Mannose-Binding Protein A, subunit A"/>
    <property type="match status" value="1"/>
</dbReference>
<dbReference type="InterPro" id="IPR001304">
    <property type="entry name" value="C-type_lectin-like"/>
</dbReference>
<dbReference type="InterPro" id="IPR016186">
    <property type="entry name" value="C-type_lectin-like/link_sf"/>
</dbReference>
<dbReference type="InterPro" id="IPR050111">
    <property type="entry name" value="C-type_lectin/snaclec_domain"/>
</dbReference>
<dbReference type="InterPro" id="IPR018378">
    <property type="entry name" value="C-type_lectin_CS"/>
</dbReference>
<dbReference type="InterPro" id="IPR016187">
    <property type="entry name" value="CTDL_fold"/>
</dbReference>
<dbReference type="InterPro" id="IPR033816">
    <property type="entry name" value="EMBP_CTLD"/>
</dbReference>
<dbReference type="InterPro" id="IPR002352">
    <property type="entry name" value="Eosinophil_major_basic"/>
</dbReference>
<dbReference type="PANTHER" id="PTHR22803">
    <property type="entry name" value="MANNOSE, PHOSPHOLIPASE, LECTIN RECEPTOR RELATED"/>
    <property type="match status" value="1"/>
</dbReference>
<dbReference type="Pfam" id="PF00059">
    <property type="entry name" value="Lectin_C"/>
    <property type="match status" value="1"/>
</dbReference>
<dbReference type="PRINTS" id="PR00770">
    <property type="entry name" value="EMAJORBASICP"/>
</dbReference>
<dbReference type="SMART" id="SM00034">
    <property type="entry name" value="CLECT"/>
    <property type="match status" value="1"/>
</dbReference>
<dbReference type="SUPFAM" id="SSF56436">
    <property type="entry name" value="C-type lectin-like"/>
    <property type="match status" value="1"/>
</dbReference>
<dbReference type="PROSITE" id="PS00615">
    <property type="entry name" value="C_TYPE_LECTIN_1"/>
    <property type="match status" value="1"/>
</dbReference>
<dbReference type="PROSITE" id="PS50041">
    <property type="entry name" value="C_TYPE_LECTIN_2"/>
    <property type="match status" value="1"/>
</dbReference>
<organism>
    <name type="scientific">Homo sapiens</name>
    <name type="common">Human</name>
    <dbReference type="NCBI Taxonomy" id="9606"/>
    <lineage>
        <taxon>Eukaryota</taxon>
        <taxon>Metazoa</taxon>
        <taxon>Chordata</taxon>
        <taxon>Craniata</taxon>
        <taxon>Vertebrata</taxon>
        <taxon>Euteleostomi</taxon>
        <taxon>Mammalia</taxon>
        <taxon>Eutheria</taxon>
        <taxon>Euarchontoglires</taxon>
        <taxon>Primates</taxon>
        <taxon>Haplorrhini</taxon>
        <taxon>Catarrhini</taxon>
        <taxon>Hominidae</taxon>
        <taxon>Homo</taxon>
    </lineage>
</organism>
<comment type="function">
    <text evidence="4">Cytotoxin and helminthotoxin. Also induces non-cytolytic histamine release from human basophils. Involved in antiparasitic defense mechanisms and immune hypersensitivity reactions. The proform acts as a proteinase inhibitor, reducing the activity of PAPPA.</text>
</comment>
<comment type="subunit">
    <text evidence="4 19 23 24 25">In pregnancy serum, the proform exists as a disulfide-linked 2:2 heterotetramer with PAPPA, as a disulfide-linked 2:2 heterotetramer with AGT, and as a complex (probably a 2:2:2 heterohexamer) with AGT and C3dg.</text>
</comment>
<comment type="interaction">
    <interactant intactId="EBI-716689">
        <id>P13727</id>
    </interactant>
    <interactant intactId="EBI-1221991">
        <id>Q13219</id>
        <label>PAPPA</label>
    </interactant>
    <organismsDiffer>false</organismsDiffer>
    <experiments>2</experiments>
</comment>
<comment type="subcellular location">
    <molecule>Bone marrow proteoglycan</molecule>
    <subcellularLocation>
        <location evidence="12 17 18">Secreted</location>
    </subcellularLocation>
    <text>The proform is secreted.</text>
</comment>
<comment type="subcellular location">
    <molecule>Eosinophil granule major basic protein</molecule>
    <subcellularLocation>
        <location>Cytoplasmic vesicle</location>
        <location>Secretory vesicle</location>
    </subcellularLocation>
    <text>The proform is secreted. The mature protein is found in the matrix of the eosinophil's large specific granule (crystalloid core).</text>
</comment>
<comment type="alternative products">
    <event type="alternative splicing"/>
    <isoform>
        <id>P13727-1</id>
        <name>1</name>
        <sequence type="displayed"/>
    </isoform>
    <isoform>
        <id>P13727-2</id>
        <name>2</name>
        <sequence type="described" ref="VSP_056735"/>
    </isoform>
</comment>
<comment type="tissue specificity">
    <text evidence="3 12 15 17 18 21">Detected in plasma and urine (at protein level) (PubMed:25326458, PubMed:36213313, PubMed:37453717). Detected in placenta (at protein level) (PubMed:32337544). High levels of the proform in placenta and pregnancy serum; in placenta, localized to X cells of septa and anchoring villi. Lower levels in a variety of other tissues including kidney, myometrium, endometrium, ovaries, breast, prostate, bone marrow and colon.</text>
</comment>
<comment type="developmental stage">
    <text evidence="3 23">Levels of the proform increase in serum and placenta during pregnancy.</text>
</comment>
<comment type="PTM">
    <text evidence="9">Nitrated.</text>
</comment>
<comment type="miscellaneous">
    <text>Binds heparin. Does not bind calcium.</text>
</comment>
<comment type="online information" name="Wikipedia">
    <link uri="https://en.wikipedia.org/wiki/Major_basic_protein"/>
    <text>Major basic protein entry</text>
</comment>
<comment type="online information" name="Functional Glycomics Gateway - Glycan Binding">
    <link uri="http://www.functionalglycomics.org/glycomics/GBPServlet?&amp;operationType=view&amp;cbpId=cbp_hum_Ctlect_207"/>
    <text>Eosinophil major basic protein</text>
</comment>
<feature type="signal peptide" evidence="23 24 26">
    <location>
        <begin position="1"/>
        <end position="16"/>
    </location>
</feature>
<feature type="chain" id="PRO_0000259923" description="Bone marrow proteoglycan">
    <location>
        <begin position="17"/>
        <end position="222"/>
    </location>
</feature>
<feature type="propeptide" id="PRO_0000017385" description="Acidic" evidence="11 16">
    <location>
        <begin position="17"/>
        <end position="105"/>
    </location>
</feature>
<feature type="chain" id="PRO_0000017386" description="Eosinophil granule major basic protein">
    <location>
        <begin position="106"/>
        <end position="222"/>
    </location>
</feature>
<feature type="domain" description="C-type lectin" evidence="1">
    <location>
        <begin position="104"/>
        <end position="222"/>
    </location>
</feature>
<feature type="region of interest" description="Disordered" evidence="2">
    <location>
        <begin position="25"/>
        <end position="75"/>
    </location>
</feature>
<feature type="compositionally biased region" description="Acidic residues" evidence="2">
    <location>
        <begin position="37"/>
        <end position="60"/>
    </location>
</feature>
<feature type="glycosylation site" description="O-linked (GalNAc...) threonine; partial" evidence="20">
    <location>
        <position position="23"/>
    </location>
</feature>
<feature type="glycosylation site" description="O-linked (GalNAc...) serine" evidence="20 26">
    <location>
        <position position="24"/>
    </location>
</feature>
<feature type="glycosylation site" description="O-linked (GalNAc...) threonine" evidence="20 26">
    <location>
        <position position="25"/>
    </location>
</feature>
<feature type="glycosylation site" description="O-linked (GalNAc...) threonine; partial" evidence="20">
    <location>
        <position position="34"/>
    </location>
</feature>
<feature type="glycosylation site" description="O-linked (Xyl...) (chondroitin sulfate) serine" evidence="12 15 17 18 20 26">
    <location>
        <position position="62"/>
    </location>
</feature>
<feature type="glycosylation site" description="N-linked (GlcNAc...) asparagine" evidence="20 26">
    <location>
        <position position="86"/>
    </location>
</feature>
<feature type="disulfide bond" description="Interchain (with C-461 in PAPPA)" evidence="1 25">
    <location>
        <position position="51"/>
    </location>
</feature>
<feature type="disulfide bond" evidence="1 25">
    <location>
        <begin position="125"/>
        <end position="220"/>
    </location>
</feature>
<feature type="disulfide bond" description="Interchain (with C-732 in PAPPA)" evidence="1 25">
    <location>
        <position position="169"/>
    </location>
</feature>
<feature type="disulfide bond" evidence="1 25">
    <location>
        <begin position="197"/>
        <end position="212"/>
    </location>
</feature>
<feature type="splice variant" id="VSP_056735" description="In isoform 2." evidence="28">
    <location>
        <begin position="112"/>
        <end position="122"/>
    </location>
</feature>
<feature type="sequence variant" id="VAR_036401" description="In a colorectal cancer sample; somatic mutation; dbSNP:rs142359007." evidence="8">
    <original>R</original>
    <variation>C</variation>
    <location>
        <position position="179"/>
    </location>
</feature>
<feature type="sequence variant" id="VAR_060729" description="In dbSNP:rs536455." evidence="5 6 7 10 13 14 22 27">
    <original>H</original>
    <variation>Y</variation>
    <location>
        <position position="206"/>
    </location>
</feature>
<feature type="sequence conflict" description="In Ref. 1; AAA36203." evidence="29" ref="1">
    <original>D</original>
    <variation>H</variation>
    <location>
        <position position="84"/>
    </location>
</feature>
<feature type="sequence conflict" description="In Ref. 7; BAG35128." evidence="29" ref="7">
    <original>P</original>
    <variation>L</variation>
    <location>
        <position position="190"/>
    </location>
</feature>
<feature type="sequence conflict" description="In Ref. 6; CAA81207." evidence="29" ref="6">
    <original>S</original>
    <variation>T</variation>
    <location>
        <position position="192"/>
    </location>
</feature>
<feature type="helix" evidence="31">
    <location>
        <begin position="92"/>
        <end position="94"/>
    </location>
</feature>
<feature type="strand" evidence="31">
    <location>
        <begin position="95"/>
        <end position="98"/>
    </location>
</feature>
<feature type="strand" evidence="30">
    <location>
        <begin position="109"/>
        <end position="116"/>
    </location>
</feature>
<feature type="helix" evidence="30">
    <location>
        <begin position="118"/>
        <end position="129"/>
    </location>
</feature>
<feature type="strand" evidence="30">
    <location>
        <begin position="130"/>
        <end position="133"/>
    </location>
</feature>
<feature type="helix" evidence="30">
    <location>
        <begin position="139"/>
        <end position="149"/>
    </location>
</feature>
<feature type="strand" evidence="30">
    <location>
        <begin position="153"/>
        <end position="164"/>
    </location>
</feature>
<feature type="strand" evidence="30">
    <location>
        <begin position="166"/>
        <end position="168"/>
    </location>
</feature>
<feature type="strand" evidence="30">
    <location>
        <begin position="171"/>
        <end position="174"/>
    </location>
</feature>
<feature type="strand" evidence="30">
    <location>
        <begin position="187"/>
        <end position="189"/>
    </location>
</feature>
<feature type="strand" evidence="32">
    <location>
        <begin position="190"/>
        <end position="192"/>
    </location>
</feature>
<feature type="strand" evidence="30">
    <location>
        <begin position="196"/>
        <end position="201"/>
    </location>
</feature>
<feature type="turn" evidence="30">
    <location>
        <begin position="202"/>
        <end position="205"/>
    </location>
</feature>
<feature type="strand" evidence="30">
    <location>
        <begin position="207"/>
        <end position="210"/>
    </location>
</feature>
<feature type="strand" evidence="32">
    <location>
        <begin position="212"/>
        <end position="214"/>
    </location>
</feature>
<feature type="strand" evidence="30">
    <location>
        <begin position="216"/>
        <end position="221"/>
    </location>
</feature>
<accession>P13727</accession>
<accession>A6XMW0</accession>
<accession>B2R5I1</accession>
<accession>P81448</accession>
<accession>Q14227</accession>
<accession>Q6ICT2</accession>
<proteinExistence type="evidence at protein level"/>
<evidence type="ECO:0000255" key="1">
    <source>
        <dbReference type="PROSITE-ProRule" id="PRU00040"/>
    </source>
</evidence>
<evidence type="ECO:0000256" key="2">
    <source>
        <dbReference type="SAM" id="MobiDB-lite"/>
    </source>
</evidence>
<evidence type="ECO:0000269" key="3">
    <source>
    </source>
</evidence>
<evidence type="ECO:0000269" key="4">
    <source>
    </source>
</evidence>
<evidence type="ECO:0000269" key="5">
    <source>
    </source>
</evidence>
<evidence type="ECO:0000269" key="6">
    <source>
    </source>
</evidence>
<evidence type="ECO:0000269" key="7">
    <source>
    </source>
</evidence>
<evidence type="ECO:0000269" key="8">
    <source>
    </source>
</evidence>
<evidence type="ECO:0000269" key="9">
    <source>
    </source>
</evidence>
<evidence type="ECO:0000269" key="10">
    <source>
    </source>
</evidence>
<evidence type="ECO:0000269" key="11">
    <source>
    </source>
</evidence>
<evidence type="ECO:0000269" key="12">
    <source>
    </source>
</evidence>
<evidence type="ECO:0000269" key="13">
    <source>
    </source>
</evidence>
<evidence type="ECO:0000269" key="14">
    <source>
    </source>
</evidence>
<evidence type="ECO:0000269" key="15">
    <source>
    </source>
</evidence>
<evidence type="ECO:0000269" key="16">
    <source>
    </source>
</evidence>
<evidence type="ECO:0000269" key="17">
    <source>
    </source>
</evidence>
<evidence type="ECO:0000269" key="18">
    <source>
    </source>
</evidence>
<evidence type="ECO:0000269" key="19">
    <source>
    </source>
</evidence>
<evidence type="ECO:0000269" key="20">
    <source>
    </source>
</evidence>
<evidence type="ECO:0000269" key="21">
    <source>
    </source>
</evidence>
<evidence type="ECO:0000269" key="22">
    <source>
    </source>
</evidence>
<evidence type="ECO:0000269" key="23">
    <source>
    </source>
</evidence>
<evidence type="ECO:0000269" key="24">
    <source>
    </source>
</evidence>
<evidence type="ECO:0000269" key="25">
    <source>
    </source>
</evidence>
<evidence type="ECO:0000269" key="26">
    <source>
    </source>
</evidence>
<evidence type="ECO:0000269" key="27">
    <source ref="8"/>
</evidence>
<evidence type="ECO:0000303" key="28">
    <source ref="9"/>
</evidence>
<evidence type="ECO:0000305" key="29"/>
<evidence type="ECO:0007829" key="30">
    <source>
        <dbReference type="PDB" id="1H8U"/>
    </source>
</evidence>
<evidence type="ECO:0007829" key="31">
    <source>
        <dbReference type="PDB" id="7Y5N"/>
    </source>
</evidence>
<evidence type="ECO:0007829" key="32">
    <source>
        <dbReference type="PDB" id="9DKZ"/>
    </source>
</evidence>
<name>PRG2_HUMAN</name>
<gene>
    <name type="primary">PRG2</name>
    <name type="synonym">MBP</name>
</gene>